<name>DUT_CLOTE</name>
<gene>
    <name evidence="1" type="primary">dut</name>
    <name type="ordered locus">CTC_01210</name>
</gene>
<evidence type="ECO:0000255" key="1">
    <source>
        <dbReference type="HAMAP-Rule" id="MF_00116"/>
    </source>
</evidence>
<sequence>MTEYTLKIKLLKEDAKLPQYAHDNDAGMDLFSTEDKIINPGKHALILTGISIELPENTEAQIRPRSGLALKNGVTVLNTPGTIDAGYRGEIGIILINHGEKNFQVEKGMKIAQMVIKPIVKVNIEEVKMLSESQRGKGGFGSTGK</sequence>
<feature type="chain" id="PRO_0000182852" description="Deoxyuridine 5'-triphosphate nucleotidohydrolase">
    <location>
        <begin position="1"/>
        <end position="145"/>
    </location>
</feature>
<feature type="binding site" evidence="1">
    <location>
        <begin position="65"/>
        <end position="67"/>
    </location>
    <ligand>
        <name>substrate</name>
    </ligand>
</feature>
<feature type="binding site" evidence="1">
    <location>
        <position position="78"/>
    </location>
    <ligand>
        <name>substrate</name>
    </ligand>
</feature>
<feature type="binding site" evidence="1">
    <location>
        <begin position="82"/>
        <end position="84"/>
    </location>
    <ligand>
        <name>substrate</name>
    </ligand>
</feature>
<keyword id="KW-0378">Hydrolase</keyword>
<keyword id="KW-0460">Magnesium</keyword>
<keyword id="KW-0479">Metal-binding</keyword>
<keyword id="KW-0546">Nucleotide metabolism</keyword>
<keyword id="KW-1185">Reference proteome</keyword>
<proteinExistence type="inferred from homology"/>
<dbReference type="EC" id="3.6.1.23" evidence="1"/>
<dbReference type="EMBL" id="AE015927">
    <property type="protein sequence ID" value="AAO35779.1"/>
    <property type="molecule type" value="Genomic_DNA"/>
</dbReference>
<dbReference type="RefSeq" id="WP_011099441.1">
    <property type="nucleotide sequence ID" value="NC_004557.1"/>
</dbReference>
<dbReference type="SMR" id="Q895R1"/>
<dbReference type="STRING" id="212717.CTC_01210"/>
<dbReference type="GeneID" id="24252948"/>
<dbReference type="KEGG" id="ctc:CTC_01210"/>
<dbReference type="HOGENOM" id="CLU_068508_1_2_9"/>
<dbReference type="OrthoDB" id="9809956at2"/>
<dbReference type="UniPathway" id="UPA00610">
    <property type="reaction ID" value="UER00666"/>
</dbReference>
<dbReference type="Proteomes" id="UP000001412">
    <property type="component" value="Chromosome"/>
</dbReference>
<dbReference type="GO" id="GO:0004170">
    <property type="term" value="F:dUTP diphosphatase activity"/>
    <property type="evidence" value="ECO:0007669"/>
    <property type="project" value="UniProtKB-UniRule"/>
</dbReference>
<dbReference type="GO" id="GO:0000287">
    <property type="term" value="F:magnesium ion binding"/>
    <property type="evidence" value="ECO:0007669"/>
    <property type="project" value="UniProtKB-UniRule"/>
</dbReference>
<dbReference type="GO" id="GO:0006226">
    <property type="term" value="P:dUMP biosynthetic process"/>
    <property type="evidence" value="ECO:0007669"/>
    <property type="project" value="UniProtKB-UniRule"/>
</dbReference>
<dbReference type="GO" id="GO:0046081">
    <property type="term" value="P:dUTP catabolic process"/>
    <property type="evidence" value="ECO:0007669"/>
    <property type="project" value="InterPro"/>
</dbReference>
<dbReference type="CDD" id="cd07557">
    <property type="entry name" value="trimeric_dUTPase"/>
    <property type="match status" value="1"/>
</dbReference>
<dbReference type="FunFam" id="2.70.40.10:FF:000008">
    <property type="entry name" value="Deoxyuridine 5'-triphosphate nucleotidohydrolase"/>
    <property type="match status" value="1"/>
</dbReference>
<dbReference type="Gene3D" id="2.70.40.10">
    <property type="match status" value="1"/>
</dbReference>
<dbReference type="HAMAP" id="MF_00116">
    <property type="entry name" value="dUTPase_bact"/>
    <property type="match status" value="1"/>
</dbReference>
<dbReference type="InterPro" id="IPR008181">
    <property type="entry name" value="dUTPase"/>
</dbReference>
<dbReference type="InterPro" id="IPR029054">
    <property type="entry name" value="dUTPase-like"/>
</dbReference>
<dbReference type="InterPro" id="IPR036157">
    <property type="entry name" value="dUTPase-like_sf"/>
</dbReference>
<dbReference type="InterPro" id="IPR033704">
    <property type="entry name" value="dUTPase_trimeric"/>
</dbReference>
<dbReference type="NCBIfam" id="TIGR00576">
    <property type="entry name" value="dut"/>
    <property type="match status" value="1"/>
</dbReference>
<dbReference type="NCBIfam" id="NF001862">
    <property type="entry name" value="PRK00601.1"/>
    <property type="match status" value="1"/>
</dbReference>
<dbReference type="PANTHER" id="PTHR11241">
    <property type="entry name" value="DEOXYURIDINE 5'-TRIPHOSPHATE NUCLEOTIDOHYDROLASE"/>
    <property type="match status" value="1"/>
</dbReference>
<dbReference type="PANTHER" id="PTHR11241:SF0">
    <property type="entry name" value="DEOXYURIDINE 5'-TRIPHOSPHATE NUCLEOTIDOHYDROLASE"/>
    <property type="match status" value="1"/>
</dbReference>
<dbReference type="Pfam" id="PF00692">
    <property type="entry name" value="dUTPase"/>
    <property type="match status" value="1"/>
</dbReference>
<dbReference type="SUPFAM" id="SSF51283">
    <property type="entry name" value="dUTPase-like"/>
    <property type="match status" value="1"/>
</dbReference>
<protein>
    <recommendedName>
        <fullName evidence="1">Deoxyuridine 5'-triphosphate nucleotidohydrolase</fullName>
        <shortName evidence="1">dUTPase</shortName>
        <ecNumber evidence="1">3.6.1.23</ecNumber>
    </recommendedName>
    <alternativeName>
        <fullName evidence="1">dUTP pyrophosphatase</fullName>
    </alternativeName>
</protein>
<organism>
    <name type="scientific">Clostridium tetani (strain Massachusetts / E88)</name>
    <dbReference type="NCBI Taxonomy" id="212717"/>
    <lineage>
        <taxon>Bacteria</taxon>
        <taxon>Bacillati</taxon>
        <taxon>Bacillota</taxon>
        <taxon>Clostridia</taxon>
        <taxon>Eubacteriales</taxon>
        <taxon>Clostridiaceae</taxon>
        <taxon>Clostridium</taxon>
    </lineage>
</organism>
<comment type="function">
    <text evidence="1">This enzyme is involved in nucleotide metabolism: it produces dUMP, the immediate precursor of thymidine nucleotides and it decreases the intracellular concentration of dUTP so that uracil cannot be incorporated into DNA.</text>
</comment>
<comment type="catalytic activity">
    <reaction evidence="1">
        <text>dUTP + H2O = dUMP + diphosphate + H(+)</text>
        <dbReference type="Rhea" id="RHEA:10248"/>
        <dbReference type="ChEBI" id="CHEBI:15377"/>
        <dbReference type="ChEBI" id="CHEBI:15378"/>
        <dbReference type="ChEBI" id="CHEBI:33019"/>
        <dbReference type="ChEBI" id="CHEBI:61555"/>
        <dbReference type="ChEBI" id="CHEBI:246422"/>
        <dbReference type="EC" id="3.6.1.23"/>
    </reaction>
</comment>
<comment type="cofactor">
    <cofactor evidence="1">
        <name>Mg(2+)</name>
        <dbReference type="ChEBI" id="CHEBI:18420"/>
    </cofactor>
</comment>
<comment type="pathway">
    <text evidence="1">Pyrimidine metabolism; dUMP biosynthesis; dUMP from dCTP (dUTP route): step 2/2.</text>
</comment>
<comment type="similarity">
    <text evidence="1">Belongs to the dUTPase family.</text>
</comment>
<reference key="1">
    <citation type="journal article" date="2003" name="Proc. Natl. Acad. Sci. U.S.A.">
        <title>The genome sequence of Clostridium tetani, the causative agent of tetanus disease.</title>
        <authorList>
            <person name="Brueggemann H."/>
            <person name="Baeumer S."/>
            <person name="Fricke W.F."/>
            <person name="Wiezer A."/>
            <person name="Liesegang H."/>
            <person name="Decker I."/>
            <person name="Herzberg C."/>
            <person name="Martinez-Arias R."/>
            <person name="Merkl R."/>
            <person name="Henne A."/>
            <person name="Gottschalk G."/>
        </authorList>
    </citation>
    <scope>NUCLEOTIDE SEQUENCE [LARGE SCALE GENOMIC DNA]</scope>
    <source>
        <strain>Massachusetts / E88</strain>
    </source>
</reference>
<accession>Q895R1</accession>